<evidence type="ECO:0000250" key="1"/>
<evidence type="ECO:0000255" key="2"/>
<evidence type="ECO:0000305" key="3"/>
<accession>P9WNQ4</accession>
<accession>L0TGW9</accession>
<accession>O05457</accession>
<accession>Q8VIR4</accession>
<keyword id="KW-1003">Cell membrane</keyword>
<keyword id="KW-0472">Membrane</keyword>
<keyword id="KW-1185">Reference proteome</keyword>
<keyword id="KW-0812">Transmembrane</keyword>
<keyword id="KW-1133">Transmembrane helix</keyword>
<sequence>MTAPHKVAFPARCAVNICYDKHLCSQVFPAGIPVEGFFEGMVELFDADLKRKGFDGVALPAGSYELHKINGVRLDINKSLDELGVQDGNTLVLVPRVAGESFEPQYESLSTGLAAMGKWLGRDGGDRMFAPVTSLTAAHTAMAIIAMAVGVVLALTLRTRTITDSPVPAAMAGGIGVLLVIGALVVWWGWRERRDLFSGFGWLAVVLLAVAAACAPPGALGAAHALIGLVVVVLGAITIGVATRKRWQTAVVTAVVTVCGILAAVAAVRMFRPVSMQVLAICVLVGLLVLIRMTPTVALWVARVRPPHFGSITGRDLFARRAGMPVDTVAPVSEADADDEDNELTDITARGTAIAASARLVNAVQVGMCVGVSLVLPAAVWGVLTPRQPWAWLALLVAGLTVGLFITQGRGFAAKYQAVALVCGASAAVCAGVLKYALDTPKGVQTGLLWPAIFVAAFAALGLAVALVVPATRFRPIIRLTVEWLEVLAMIALLPAAAALGGLFAWLRH</sequence>
<comment type="subunit">
    <text evidence="1">Part of the ESX-2 / type VII secretion system (T7SS), which is composed of cytosolic and membrane components.</text>
</comment>
<comment type="subcellular location">
    <subcellularLocation>
        <location evidence="3">Cell membrane</location>
        <topology evidence="3">Multi-pass membrane protein</topology>
    </subcellularLocation>
</comment>
<comment type="similarity">
    <text evidence="3">Belongs to the EccD/Snm4 family.</text>
</comment>
<comment type="sequence caution" evidence="3">
    <conflict type="erroneous initiation">
        <sequence resource="EMBL-CDS" id="AAK48369"/>
    </conflict>
    <text>Truncated N-terminus.</text>
</comment>
<reference key="1">
    <citation type="journal article" date="2002" name="J. Bacteriol.">
        <title>Whole-genome comparison of Mycobacterium tuberculosis clinical and laboratory strains.</title>
        <authorList>
            <person name="Fleischmann R.D."/>
            <person name="Alland D."/>
            <person name="Eisen J.A."/>
            <person name="Carpenter L."/>
            <person name="White O."/>
            <person name="Peterson J.D."/>
            <person name="DeBoy R.T."/>
            <person name="Dodson R.J."/>
            <person name="Gwinn M.L."/>
            <person name="Haft D.H."/>
            <person name="Hickey E.K."/>
            <person name="Kolonay J.F."/>
            <person name="Nelson W.C."/>
            <person name="Umayam L.A."/>
            <person name="Ermolaeva M.D."/>
            <person name="Salzberg S.L."/>
            <person name="Delcher A."/>
            <person name="Utterback T.R."/>
            <person name="Weidman J.F."/>
            <person name="Khouri H.M."/>
            <person name="Gill J."/>
            <person name="Mikula A."/>
            <person name="Bishai W."/>
            <person name="Jacobs W.R. Jr."/>
            <person name="Venter J.C."/>
            <person name="Fraser C.M."/>
        </authorList>
    </citation>
    <scope>NUCLEOTIDE SEQUENCE [LARGE SCALE GENOMIC DNA]</scope>
    <source>
        <strain>CDC 1551 / Oshkosh</strain>
    </source>
</reference>
<dbReference type="EMBL" id="AE000516">
    <property type="protein sequence ID" value="AAK48369.1"/>
    <property type="status" value="ALT_INIT"/>
    <property type="molecule type" value="Genomic_DNA"/>
</dbReference>
<dbReference type="PIR" id="H70597">
    <property type="entry name" value="H70597"/>
</dbReference>
<dbReference type="RefSeq" id="WP_003917858.1">
    <property type="nucleotide sequence ID" value="NC_002755.2"/>
</dbReference>
<dbReference type="SMR" id="P9WNQ4"/>
<dbReference type="KEGG" id="mtc:MT4002"/>
<dbReference type="PATRIC" id="fig|83331.31.peg.4309"/>
<dbReference type="HOGENOM" id="CLU_042648_0_0_11"/>
<dbReference type="Proteomes" id="UP000001020">
    <property type="component" value="Chromosome"/>
</dbReference>
<dbReference type="GO" id="GO:0005886">
    <property type="term" value="C:plasma membrane"/>
    <property type="evidence" value="ECO:0007669"/>
    <property type="project" value="UniProtKB-SubCell"/>
</dbReference>
<dbReference type="FunFam" id="3.10.20.90:FF:000271">
    <property type="entry name" value="Type VII secretion integral membrane protein EccD"/>
    <property type="match status" value="1"/>
</dbReference>
<dbReference type="Gene3D" id="3.10.20.90">
    <property type="entry name" value="Phosphatidylinositol 3-kinase Catalytic Subunit, Chain A, domain 1"/>
    <property type="match status" value="1"/>
</dbReference>
<dbReference type="InterPro" id="IPR044049">
    <property type="entry name" value="EccD_transm"/>
</dbReference>
<dbReference type="InterPro" id="IPR006707">
    <property type="entry name" value="T7SS_EccD"/>
</dbReference>
<dbReference type="InterPro" id="IPR024962">
    <property type="entry name" value="YukD-like"/>
</dbReference>
<dbReference type="NCBIfam" id="TIGR03920">
    <property type="entry name" value="T7SS_EccD"/>
    <property type="match status" value="1"/>
</dbReference>
<dbReference type="Pfam" id="PF19053">
    <property type="entry name" value="EccD"/>
    <property type="match status" value="1"/>
</dbReference>
<dbReference type="Pfam" id="PF08817">
    <property type="entry name" value="YukD"/>
    <property type="match status" value="1"/>
</dbReference>
<protein>
    <recommendedName>
        <fullName>ESX-2 secretion system protein eccD2</fullName>
    </recommendedName>
    <alternativeName>
        <fullName>ESX conserved component D2</fullName>
    </alternativeName>
    <alternativeName>
        <fullName>Type VII secretion system protein eccD2</fullName>
        <shortName>T7SS protein eccD2</shortName>
    </alternativeName>
</protein>
<gene>
    <name type="primary">eccD2</name>
    <name type="ordered locus">MT4002</name>
</gene>
<feature type="chain" id="PRO_0000427086" description="ESX-2 secretion system protein eccD2">
    <location>
        <begin position="1"/>
        <end position="509"/>
    </location>
</feature>
<feature type="transmembrane region" description="Helical" evidence="2">
    <location>
        <begin position="135"/>
        <end position="155"/>
    </location>
</feature>
<feature type="transmembrane region" description="Helical" evidence="2">
    <location>
        <begin position="170"/>
        <end position="190"/>
    </location>
</feature>
<feature type="transmembrane region" description="Helical" evidence="2">
    <location>
        <begin position="196"/>
        <end position="216"/>
    </location>
</feature>
<feature type="transmembrane region" description="Helical" evidence="2">
    <location>
        <begin position="222"/>
        <end position="242"/>
    </location>
</feature>
<feature type="transmembrane region" description="Helical" evidence="2">
    <location>
        <begin position="248"/>
        <end position="268"/>
    </location>
</feature>
<feature type="transmembrane region" description="Helical" evidence="2">
    <location>
        <begin position="281"/>
        <end position="301"/>
    </location>
</feature>
<feature type="transmembrane region" description="Helical" evidence="2">
    <location>
        <begin position="364"/>
        <end position="384"/>
    </location>
</feature>
<feature type="transmembrane region" description="Helical" evidence="2">
    <location>
        <begin position="389"/>
        <end position="409"/>
    </location>
</feature>
<feature type="transmembrane region" description="Helical" evidence="2">
    <location>
        <begin position="418"/>
        <end position="438"/>
    </location>
</feature>
<feature type="transmembrane region" description="Helical" evidence="2">
    <location>
        <begin position="449"/>
        <end position="469"/>
    </location>
</feature>
<feature type="transmembrane region" description="Helical" evidence="2">
    <location>
        <begin position="487"/>
        <end position="507"/>
    </location>
</feature>
<name>ECCD2_MYCTO</name>
<proteinExistence type="inferred from homology"/>
<organism>
    <name type="scientific">Mycobacterium tuberculosis (strain CDC 1551 / Oshkosh)</name>
    <dbReference type="NCBI Taxonomy" id="83331"/>
    <lineage>
        <taxon>Bacteria</taxon>
        <taxon>Bacillati</taxon>
        <taxon>Actinomycetota</taxon>
        <taxon>Actinomycetes</taxon>
        <taxon>Mycobacteriales</taxon>
        <taxon>Mycobacteriaceae</taxon>
        <taxon>Mycobacterium</taxon>
        <taxon>Mycobacterium tuberculosis complex</taxon>
    </lineage>
</organism>